<dbReference type="EMBL" id="AK054290">
    <property type="protein sequence ID" value="BAC35719.1"/>
    <property type="status" value="ALT_INIT"/>
    <property type="molecule type" value="mRNA"/>
</dbReference>
<dbReference type="EMBL" id="AK054413">
    <property type="protein sequence ID" value="BAC35770.1"/>
    <property type="status" value="ALT_INIT"/>
    <property type="molecule type" value="mRNA"/>
</dbReference>
<dbReference type="EMBL" id="AC164121">
    <property type="status" value="NOT_ANNOTATED_CDS"/>
    <property type="molecule type" value="Genomic_DNA"/>
</dbReference>
<dbReference type="EMBL" id="BC141075">
    <property type="protein sequence ID" value="AAI41076.1"/>
    <property type="status" value="ALT_INIT"/>
    <property type="molecule type" value="mRNA"/>
</dbReference>
<dbReference type="EMBL" id="BC145329">
    <property type="protein sequence ID" value="AAI45330.1"/>
    <property type="status" value="ALT_INIT"/>
    <property type="molecule type" value="mRNA"/>
</dbReference>
<dbReference type="EMBL" id="U81451">
    <property type="protein sequence ID" value="AAB51132.1"/>
    <property type="molecule type" value="mRNA"/>
</dbReference>
<dbReference type="EMBL" id="AJ000220">
    <property type="protein sequence ID" value="CAA03949.1"/>
    <property type="molecule type" value="Genomic_DNA"/>
</dbReference>
<dbReference type="EMBL" id="AY054413">
    <property type="protein sequence ID" value="AAL15175.1"/>
    <property type="status" value="ALT_INIT"/>
    <property type="molecule type" value="mRNA"/>
</dbReference>
<dbReference type="EMBL" id="AF067422">
    <property type="protein sequence ID" value="AAC17919.1"/>
    <property type="status" value="ALT_INIT"/>
    <property type="molecule type" value="mRNA"/>
</dbReference>
<dbReference type="EMBL" id="AF063853">
    <property type="protein sequence ID" value="AAC16656.1"/>
    <property type="molecule type" value="mRNA"/>
</dbReference>
<dbReference type="RefSeq" id="NP_034287.3">
    <property type="nucleotide sequence ID" value="NM_010157.3"/>
</dbReference>
<dbReference type="RefSeq" id="NP_997590.1">
    <property type="nucleotide sequence ID" value="NM_207707.1"/>
</dbReference>
<dbReference type="SMR" id="O08537"/>
<dbReference type="BioGRID" id="199522">
    <property type="interactions" value="3"/>
</dbReference>
<dbReference type="FunCoup" id="O08537">
    <property type="interactions" value="506"/>
</dbReference>
<dbReference type="IntAct" id="O08537">
    <property type="interactions" value="2"/>
</dbReference>
<dbReference type="STRING" id="10090.ENSMUSP00000151463"/>
<dbReference type="BindingDB" id="O08537"/>
<dbReference type="ChEMBL" id="CHEMBL2995"/>
<dbReference type="DrugCentral" id="O08537"/>
<dbReference type="GuidetoPHARMACOLOGY" id="621"/>
<dbReference type="GlyConnect" id="146">
    <property type="glycosylation" value="1 O-GlcNAc glycan (1 site)"/>
</dbReference>
<dbReference type="GlyCosmos" id="O08537">
    <property type="glycosylation" value="1 site, 1 glycan"/>
</dbReference>
<dbReference type="GlyGen" id="O08537">
    <property type="glycosylation" value="2 sites, 1 O-linked glycan (2 sites)"/>
</dbReference>
<dbReference type="iPTMnet" id="O08537"/>
<dbReference type="PhosphoSitePlus" id="O08537"/>
<dbReference type="PaxDb" id="10090-ENSMUSP00000098849"/>
<dbReference type="Antibodypedia" id="11874">
    <property type="antibodies" value="1804 antibodies from 47 providers"/>
</dbReference>
<dbReference type="DNASU" id="13983"/>
<dbReference type="Ensembl" id="ENSMUST00000101291.11">
    <molecule id="O08537-2"/>
    <property type="protein sequence ID" value="ENSMUSP00000098849.5"/>
    <property type="gene ID" value="ENSMUSG00000021055.15"/>
</dbReference>
<dbReference type="Ensembl" id="ENSMUST00000110421.9">
    <molecule id="O08537-1"/>
    <property type="protein sequence ID" value="ENSMUSP00000106051.3"/>
    <property type="gene ID" value="ENSMUSG00000021055.15"/>
</dbReference>
<dbReference type="Ensembl" id="ENSMUST00000133564.9">
    <molecule id="O08537-6"/>
    <property type="protein sequence ID" value="ENSMUSP00000138637.3"/>
    <property type="gene ID" value="ENSMUSG00000021055.15"/>
</dbReference>
<dbReference type="GeneID" id="13983"/>
<dbReference type="KEGG" id="mmu:13983"/>
<dbReference type="UCSC" id="uc007nxu.1">
    <molecule id="O08537-2"/>
    <property type="organism name" value="mouse"/>
</dbReference>
<dbReference type="UCSC" id="uc007nxv.1">
    <molecule id="O08537-1"/>
    <property type="organism name" value="mouse"/>
</dbReference>
<dbReference type="AGR" id="MGI:109392"/>
<dbReference type="CTD" id="2100"/>
<dbReference type="MGI" id="MGI:109392">
    <property type="gene designation" value="Esr2"/>
</dbReference>
<dbReference type="VEuPathDB" id="HostDB:ENSMUSG00000021055"/>
<dbReference type="eggNOG" id="KOG3575">
    <property type="taxonomic scope" value="Eukaryota"/>
</dbReference>
<dbReference type="GeneTree" id="ENSGT00940000156116"/>
<dbReference type="InParanoid" id="O08537"/>
<dbReference type="OMA" id="DPHSHGM"/>
<dbReference type="OrthoDB" id="5799427at2759"/>
<dbReference type="TreeFam" id="TF323751"/>
<dbReference type="Reactome" id="R-MMU-1257604">
    <property type="pathway name" value="PIP3 activates AKT signaling"/>
</dbReference>
<dbReference type="Reactome" id="R-MMU-383280">
    <property type="pathway name" value="Nuclear Receptor transcription pathway"/>
</dbReference>
<dbReference type="Reactome" id="R-MMU-6811558">
    <property type="pathway name" value="PI5P, PP2A and IER3 Regulate PI3K/AKT Signaling"/>
</dbReference>
<dbReference type="Reactome" id="R-MMU-8939211">
    <property type="pathway name" value="ESR-mediated signaling"/>
</dbReference>
<dbReference type="Reactome" id="R-MMU-9009391">
    <property type="pathway name" value="Extra-nuclear estrogen signaling"/>
</dbReference>
<dbReference type="BioGRID-ORCS" id="13983">
    <property type="hits" value="2 hits in 81 CRISPR screens"/>
</dbReference>
<dbReference type="ChiTaRS" id="Esr2">
    <property type="organism name" value="mouse"/>
</dbReference>
<dbReference type="PRO" id="PR:O08537"/>
<dbReference type="Proteomes" id="UP000000589">
    <property type="component" value="Chromosome 12"/>
</dbReference>
<dbReference type="RNAct" id="O08537">
    <property type="molecule type" value="protein"/>
</dbReference>
<dbReference type="Bgee" id="ENSMUSG00000021055">
    <property type="expression patterns" value="Expressed in animal zygote and 68 other cell types or tissues"/>
</dbReference>
<dbReference type="ExpressionAtlas" id="O08537">
    <property type="expression patterns" value="baseline and differential"/>
</dbReference>
<dbReference type="GO" id="GO:0005737">
    <property type="term" value="C:cytoplasm"/>
    <property type="evidence" value="ECO:0000314"/>
    <property type="project" value="MGI"/>
</dbReference>
<dbReference type="GO" id="GO:0005739">
    <property type="term" value="C:mitochondrion"/>
    <property type="evidence" value="ECO:0000266"/>
    <property type="project" value="MGI"/>
</dbReference>
<dbReference type="GO" id="GO:0005634">
    <property type="term" value="C:nucleus"/>
    <property type="evidence" value="ECO:0000314"/>
    <property type="project" value="MGI"/>
</dbReference>
<dbReference type="GO" id="GO:0003677">
    <property type="term" value="F:DNA binding"/>
    <property type="evidence" value="ECO:0000314"/>
    <property type="project" value="MGI"/>
</dbReference>
<dbReference type="GO" id="GO:0030284">
    <property type="term" value="F:nuclear estrogen receptor activity"/>
    <property type="evidence" value="ECO:0007669"/>
    <property type="project" value="InterPro"/>
</dbReference>
<dbReference type="GO" id="GO:0043565">
    <property type="term" value="F:sequence-specific DNA binding"/>
    <property type="evidence" value="ECO:0007669"/>
    <property type="project" value="InterPro"/>
</dbReference>
<dbReference type="GO" id="GO:0005496">
    <property type="term" value="F:steroid binding"/>
    <property type="evidence" value="ECO:0000250"/>
    <property type="project" value="UniProtKB"/>
</dbReference>
<dbReference type="GO" id="GO:0008270">
    <property type="term" value="F:zinc ion binding"/>
    <property type="evidence" value="ECO:0007669"/>
    <property type="project" value="UniProtKB-KW"/>
</dbReference>
<dbReference type="GO" id="GO:0030521">
    <property type="term" value="P:androgen receptor signaling pathway"/>
    <property type="evidence" value="ECO:0000315"/>
    <property type="project" value="MGI"/>
</dbReference>
<dbReference type="GO" id="GO:0007420">
    <property type="term" value="P:brain development"/>
    <property type="evidence" value="ECO:0000315"/>
    <property type="project" value="MGI"/>
</dbReference>
<dbReference type="GO" id="GO:0008283">
    <property type="term" value="P:cell population proliferation"/>
    <property type="evidence" value="ECO:0000316"/>
    <property type="project" value="MGI"/>
</dbReference>
<dbReference type="GO" id="GO:0071392">
    <property type="term" value="P:cellular response to estradiol stimulus"/>
    <property type="evidence" value="ECO:0007669"/>
    <property type="project" value="InterPro"/>
</dbReference>
<dbReference type="GO" id="GO:0060743">
    <property type="term" value="P:epithelial cell maturation involved in prostate gland development"/>
    <property type="evidence" value="ECO:0000315"/>
    <property type="project" value="MGI"/>
</dbReference>
<dbReference type="GO" id="GO:0050673">
    <property type="term" value="P:epithelial cell proliferation"/>
    <property type="evidence" value="ECO:0000315"/>
    <property type="project" value="MGI"/>
</dbReference>
<dbReference type="GO" id="GO:0030520">
    <property type="term" value="P:estrogen receptor signaling pathway"/>
    <property type="evidence" value="ECO:0000315"/>
    <property type="project" value="MGI"/>
</dbReference>
<dbReference type="GO" id="GO:0008628">
    <property type="term" value="P:hormone-mediated apoptotic signaling pathway"/>
    <property type="evidence" value="ECO:0000315"/>
    <property type="project" value="MGI"/>
</dbReference>
<dbReference type="GO" id="GO:0060766">
    <property type="term" value="P:negative regulation of androgen receptor signaling pathway"/>
    <property type="evidence" value="ECO:0000315"/>
    <property type="project" value="MGI"/>
</dbReference>
<dbReference type="GO" id="GO:0008285">
    <property type="term" value="P:negative regulation of cell population proliferation"/>
    <property type="evidence" value="ECO:0000316"/>
    <property type="project" value="MGI"/>
</dbReference>
<dbReference type="GO" id="GO:0050680">
    <property type="term" value="P:negative regulation of epithelial cell proliferation"/>
    <property type="evidence" value="ECO:0000315"/>
    <property type="project" value="MGI"/>
</dbReference>
<dbReference type="GO" id="GO:0001764">
    <property type="term" value="P:neuron migration"/>
    <property type="evidence" value="ECO:0000315"/>
    <property type="project" value="MGI"/>
</dbReference>
<dbReference type="GO" id="GO:0001541">
    <property type="term" value="P:ovarian follicle development"/>
    <property type="evidence" value="ECO:0000315"/>
    <property type="project" value="MGI"/>
</dbReference>
<dbReference type="GO" id="GO:0051091">
    <property type="term" value="P:positive regulation of DNA-binding transcription factor activity"/>
    <property type="evidence" value="ECO:0000250"/>
    <property type="project" value="UniProtKB"/>
</dbReference>
<dbReference type="GO" id="GO:0045893">
    <property type="term" value="P:positive regulation of DNA-templated transcription"/>
    <property type="evidence" value="ECO:0000250"/>
    <property type="project" value="UniProtKB"/>
</dbReference>
<dbReference type="GO" id="GO:0060740">
    <property type="term" value="P:prostate gland epithelium morphogenesis"/>
    <property type="evidence" value="ECO:0000315"/>
    <property type="project" value="MGI"/>
</dbReference>
<dbReference type="GO" id="GO:0042127">
    <property type="term" value="P:regulation of cell population proliferation"/>
    <property type="evidence" value="ECO:0000315"/>
    <property type="project" value="MGI"/>
</dbReference>
<dbReference type="GO" id="GO:0060065">
    <property type="term" value="P:uterus development"/>
    <property type="evidence" value="ECO:0000316"/>
    <property type="project" value="MGI"/>
</dbReference>
<dbReference type="GO" id="GO:0060068">
    <property type="term" value="P:vagina development"/>
    <property type="evidence" value="ECO:0000316"/>
    <property type="project" value="MGI"/>
</dbReference>
<dbReference type="CDD" id="cd07171">
    <property type="entry name" value="NR_DBD_ER"/>
    <property type="match status" value="1"/>
</dbReference>
<dbReference type="CDD" id="cd06949">
    <property type="entry name" value="NR_LBD_ER"/>
    <property type="match status" value="1"/>
</dbReference>
<dbReference type="FunFam" id="1.10.565.10:FF:000010">
    <property type="entry name" value="Estrogen receptor"/>
    <property type="match status" value="1"/>
</dbReference>
<dbReference type="FunFam" id="3.30.50.10:FF:000014">
    <property type="entry name" value="Estrogen receptor beta"/>
    <property type="match status" value="1"/>
</dbReference>
<dbReference type="Gene3D" id="3.30.50.10">
    <property type="entry name" value="Erythroid Transcription Factor GATA-1, subunit A"/>
    <property type="match status" value="1"/>
</dbReference>
<dbReference type="Gene3D" id="1.10.565.10">
    <property type="entry name" value="Retinoid X Receptor"/>
    <property type="match status" value="1"/>
</dbReference>
<dbReference type="InterPro" id="IPR021064">
    <property type="entry name" value="ER-beta-like_N"/>
</dbReference>
<dbReference type="InterPro" id="IPR028355">
    <property type="entry name" value="ER-beta/gamma"/>
</dbReference>
<dbReference type="InterPro" id="IPR024178">
    <property type="entry name" value="Est_rcpt/est-rel_rcp"/>
</dbReference>
<dbReference type="InterPro" id="IPR035500">
    <property type="entry name" value="NHR-like_dom_sf"/>
</dbReference>
<dbReference type="InterPro" id="IPR000536">
    <property type="entry name" value="Nucl_hrmn_rcpt_lig-bd"/>
</dbReference>
<dbReference type="InterPro" id="IPR050200">
    <property type="entry name" value="Nuclear_hormone_rcpt_NR3"/>
</dbReference>
<dbReference type="InterPro" id="IPR001723">
    <property type="entry name" value="Nuclear_hrmn_rcpt"/>
</dbReference>
<dbReference type="InterPro" id="IPR001628">
    <property type="entry name" value="Znf_hrmn_rcpt"/>
</dbReference>
<dbReference type="InterPro" id="IPR013088">
    <property type="entry name" value="Znf_NHR/GATA"/>
</dbReference>
<dbReference type="PANTHER" id="PTHR48092">
    <property type="entry name" value="KNIRPS-RELATED PROTEIN-RELATED"/>
    <property type="match status" value="1"/>
</dbReference>
<dbReference type="Pfam" id="PF12497">
    <property type="entry name" value="ERbeta_N"/>
    <property type="match status" value="1"/>
</dbReference>
<dbReference type="Pfam" id="PF00104">
    <property type="entry name" value="Hormone_recep"/>
    <property type="match status" value="1"/>
</dbReference>
<dbReference type="Pfam" id="PF00105">
    <property type="entry name" value="zf-C4"/>
    <property type="match status" value="1"/>
</dbReference>
<dbReference type="PIRSF" id="PIRSF500102">
    <property type="entry name" value="ER-b"/>
    <property type="match status" value="1"/>
</dbReference>
<dbReference type="PIRSF" id="PIRSF002527">
    <property type="entry name" value="ER-like_NR"/>
    <property type="match status" value="1"/>
</dbReference>
<dbReference type="PRINTS" id="PR00398">
    <property type="entry name" value="STRDHORMONER"/>
</dbReference>
<dbReference type="PRINTS" id="PR00047">
    <property type="entry name" value="STROIDFINGER"/>
</dbReference>
<dbReference type="SMART" id="SM00430">
    <property type="entry name" value="HOLI"/>
    <property type="match status" value="1"/>
</dbReference>
<dbReference type="SMART" id="SM00399">
    <property type="entry name" value="ZnF_C4"/>
    <property type="match status" value="1"/>
</dbReference>
<dbReference type="SUPFAM" id="SSF57716">
    <property type="entry name" value="Glucocorticoid receptor-like (DNA-binding domain)"/>
    <property type="match status" value="1"/>
</dbReference>
<dbReference type="SUPFAM" id="SSF48508">
    <property type="entry name" value="Nuclear receptor ligand-binding domain"/>
    <property type="match status" value="1"/>
</dbReference>
<dbReference type="PROSITE" id="PS51843">
    <property type="entry name" value="NR_LBD"/>
    <property type="match status" value="1"/>
</dbReference>
<dbReference type="PROSITE" id="PS00031">
    <property type="entry name" value="NUCLEAR_REC_DBD_1"/>
    <property type="match status" value="1"/>
</dbReference>
<dbReference type="PROSITE" id="PS51030">
    <property type="entry name" value="NUCLEAR_REC_DBD_2"/>
    <property type="match status" value="1"/>
</dbReference>
<keyword id="KW-0010">Activator</keyword>
<keyword id="KW-0025">Alternative splicing</keyword>
<keyword id="KW-0238">DNA-binding</keyword>
<keyword id="KW-0325">Glycoprotein</keyword>
<keyword id="KW-0446">Lipid-binding</keyword>
<keyword id="KW-0479">Metal-binding</keyword>
<keyword id="KW-0539">Nucleus</keyword>
<keyword id="KW-0597">Phosphoprotein</keyword>
<keyword id="KW-0675">Receptor</keyword>
<keyword id="KW-1185">Reference proteome</keyword>
<keyword id="KW-0754">Steroid-binding</keyword>
<keyword id="KW-0804">Transcription</keyword>
<keyword id="KW-0805">Transcription regulation</keyword>
<keyword id="KW-0862">Zinc</keyword>
<keyword id="KW-0863">Zinc-finger</keyword>
<organism>
    <name type="scientific">Mus musculus</name>
    <name type="common">Mouse</name>
    <dbReference type="NCBI Taxonomy" id="10090"/>
    <lineage>
        <taxon>Eukaryota</taxon>
        <taxon>Metazoa</taxon>
        <taxon>Chordata</taxon>
        <taxon>Craniata</taxon>
        <taxon>Vertebrata</taxon>
        <taxon>Euteleostomi</taxon>
        <taxon>Mammalia</taxon>
        <taxon>Eutheria</taxon>
        <taxon>Euarchontoglires</taxon>
        <taxon>Glires</taxon>
        <taxon>Rodentia</taxon>
        <taxon>Myomorpha</taxon>
        <taxon>Muroidea</taxon>
        <taxon>Muridae</taxon>
        <taxon>Murinae</taxon>
        <taxon>Mus</taxon>
        <taxon>Mus</taxon>
    </lineage>
</organism>
<accession>O08537</accession>
<accession>B2RUC6</accession>
<accession>E9QKX7</accession>
<accession>O35635</accession>
<accession>O70519</accession>
<accession>Q8BG65</accession>
<accession>Q91Z86</accession>
<protein>
    <recommendedName>
        <fullName>Estrogen receptor beta</fullName>
        <shortName>ER-beta</shortName>
    </recommendedName>
    <alternativeName>
        <fullName>Nuclear receptor subfamily 3 group A member 2</fullName>
    </alternativeName>
</protein>
<reference key="1">
    <citation type="journal article" date="2005" name="Science">
        <title>The transcriptional landscape of the mammalian genome.</title>
        <authorList>
            <person name="Carninci P."/>
            <person name="Kasukawa T."/>
            <person name="Katayama S."/>
            <person name="Gough J."/>
            <person name="Frith M.C."/>
            <person name="Maeda N."/>
            <person name="Oyama R."/>
            <person name="Ravasi T."/>
            <person name="Lenhard B."/>
            <person name="Wells C."/>
            <person name="Kodzius R."/>
            <person name="Shimokawa K."/>
            <person name="Bajic V.B."/>
            <person name="Brenner S.E."/>
            <person name="Batalov S."/>
            <person name="Forrest A.R."/>
            <person name="Zavolan M."/>
            <person name="Davis M.J."/>
            <person name="Wilming L.G."/>
            <person name="Aidinis V."/>
            <person name="Allen J.E."/>
            <person name="Ambesi-Impiombato A."/>
            <person name="Apweiler R."/>
            <person name="Aturaliya R.N."/>
            <person name="Bailey T.L."/>
            <person name="Bansal M."/>
            <person name="Baxter L."/>
            <person name="Beisel K.W."/>
            <person name="Bersano T."/>
            <person name="Bono H."/>
            <person name="Chalk A.M."/>
            <person name="Chiu K.P."/>
            <person name="Choudhary V."/>
            <person name="Christoffels A."/>
            <person name="Clutterbuck D.R."/>
            <person name="Crowe M.L."/>
            <person name="Dalla E."/>
            <person name="Dalrymple B.P."/>
            <person name="de Bono B."/>
            <person name="Della Gatta G."/>
            <person name="di Bernardo D."/>
            <person name="Down T."/>
            <person name="Engstrom P."/>
            <person name="Fagiolini M."/>
            <person name="Faulkner G."/>
            <person name="Fletcher C.F."/>
            <person name="Fukushima T."/>
            <person name="Furuno M."/>
            <person name="Futaki S."/>
            <person name="Gariboldi M."/>
            <person name="Georgii-Hemming P."/>
            <person name="Gingeras T.R."/>
            <person name="Gojobori T."/>
            <person name="Green R.E."/>
            <person name="Gustincich S."/>
            <person name="Harbers M."/>
            <person name="Hayashi Y."/>
            <person name="Hensch T.K."/>
            <person name="Hirokawa N."/>
            <person name="Hill D."/>
            <person name="Huminiecki L."/>
            <person name="Iacono M."/>
            <person name="Ikeo K."/>
            <person name="Iwama A."/>
            <person name="Ishikawa T."/>
            <person name="Jakt M."/>
            <person name="Kanapin A."/>
            <person name="Katoh M."/>
            <person name="Kawasawa Y."/>
            <person name="Kelso J."/>
            <person name="Kitamura H."/>
            <person name="Kitano H."/>
            <person name="Kollias G."/>
            <person name="Krishnan S.P."/>
            <person name="Kruger A."/>
            <person name="Kummerfeld S.K."/>
            <person name="Kurochkin I.V."/>
            <person name="Lareau L.F."/>
            <person name="Lazarevic D."/>
            <person name="Lipovich L."/>
            <person name="Liu J."/>
            <person name="Liuni S."/>
            <person name="McWilliam S."/>
            <person name="Madan Babu M."/>
            <person name="Madera M."/>
            <person name="Marchionni L."/>
            <person name="Matsuda H."/>
            <person name="Matsuzawa S."/>
            <person name="Miki H."/>
            <person name="Mignone F."/>
            <person name="Miyake S."/>
            <person name="Morris K."/>
            <person name="Mottagui-Tabar S."/>
            <person name="Mulder N."/>
            <person name="Nakano N."/>
            <person name="Nakauchi H."/>
            <person name="Ng P."/>
            <person name="Nilsson R."/>
            <person name="Nishiguchi S."/>
            <person name="Nishikawa S."/>
            <person name="Nori F."/>
            <person name="Ohara O."/>
            <person name="Okazaki Y."/>
            <person name="Orlando V."/>
            <person name="Pang K.C."/>
            <person name="Pavan W.J."/>
            <person name="Pavesi G."/>
            <person name="Pesole G."/>
            <person name="Petrovsky N."/>
            <person name="Piazza S."/>
            <person name="Reed J."/>
            <person name="Reid J.F."/>
            <person name="Ring B.Z."/>
            <person name="Ringwald M."/>
            <person name="Rost B."/>
            <person name="Ruan Y."/>
            <person name="Salzberg S.L."/>
            <person name="Sandelin A."/>
            <person name="Schneider C."/>
            <person name="Schoenbach C."/>
            <person name="Sekiguchi K."/>
            <person name="Semple C.A."/>
            <person name="Seno S."/>
            <person name="Sessa L."/>
            <person name="Sheng Y."/>
            <person name="Shibata Y."/>
            <person name="Shimada H."/>
            <person name="Shimada K."/>
            <person name="Silva D."/>
            <person name="Sinclair B."/>
            <person name="Sperling S."/>
            <person name="Stupka E."/>
            <person name="Sugiura K."/>
            <person name="Sultana R."/>
            <person name="Takenaka Y."/>
            <person name="Taki K."/>
            <person name="Tammoja K."/>
            <person name="Tan S.L."/>
            <person name="Tang S."/>
            <person name="Taylor M.S."/>
            <person name="Tegner J."/>
            <person name="Teichmann S.A."/>
            <person name="Ueda H.R."/>
            <person name="van Nimwegen E."/>
            <person name="Verardo R."/>
            <person name="Wei C.L."/>
            <person name="Yagi K."/>
            <person name="Yamanishi H."/>
            <person name="Zabarovsky E."/>
            <person name="Zhu S."/>
            <person name="Zimmer A."/>
            <person name="Hide W."/>
            <person name="Bult C."/>
            <person name="Grimmond S.M."/>
            <person name="Teasdale R.D."/>
            <person name="Liu E.T."/>
            <person name="Brusic V."/>
            <person name="Quackenbush J."/>
            <person name="Wahlestedt C."/>
            <person name="Mattick J.S."/>
            <person name="Hume D.A."/>
            <person name="Kai C."/>
            <person name="Sasaki D."/>
            <person name="Tomaru Y."/>
            <person name="Fukuda S."/>
            <person name="Kanamori-Katayama M."/>
            <person name="Suzuki M."/>
            <person name="Aoki J."/>
            <person name="Arakawa T."/>
            <person name="Iida J."/>
            <person name="Imamura K."/>
            <person name="Itoh M."/>
            <person name="Kato T."/>
            <person name="Kawaji H."/>
            <person name="Kawagashira N."/>
            <person name="Kawashima T."/>
            <person name="Kojima M."/>
            <person name="Kondo S."/>
            <person name="Konno H."/>
            <person name="Nakano K."/>
            <person name="Ninomiya N."/>
            <person name="Nishio T."/>
            <person name="Okada M."/>
            <person name="Plessy C."/>
            <person name="Shibata K."/>
            <person name="Shiraki T."/>
            <person name="Suzuki S."/>
            <person name="Tagami M."/>
            <person name="Waki K."/>
            <person name="Watahiki A."/>
            <person name="Okamura-Oho Y."/>
            <person name="Suzuki H."/>
            <person name="Kawai J."/>
            <person name="Hayashizaki Y."/>
        </authorList>
    </citation>
    <scope>NUCLEOTIDE SEQUENCE [LARGE SCALE MRNA] (ISOFORM 2)</scope>
    <source>
        <strain>C57BL/6J</strain>
        <tissue>Ovary</tissue>
    </source>
</reference>
<reference key="2">
    <citation type="journal article" date="2009" name="PLoS Biol.">
        <title>Lineage-specific biology revealed by a finished genome assembly of the mouse.</title>
        <authorList>
            <person name="Church D.M."/>
            <person name="Goodstadt L."/>
            <person name="Hillier L.W."/>
            <person name="Zody M.C."/>
            <person name="Goldstein S."/>
            <person name="She X."/>
            <person name="Bult C.J."/>
            <person name="Agarwala R."/>
            <person name="Cherry J.L."/>
            <person name="DiCuccio M."/>
            <person name="Hlavina W."/>
            <person name="Kapustin Y."/>
            <person name="Meric P."/>
            <person name="Maglott D."/>
            <person name="Birtle Z."/>
            <person name="Marques A.C."/>
            <person name="Graves T."/>
            <person name="Zhou S."/>
            <person name="Teague B."/>
            <person name="Potamousis K."/>
            <person name="Churas C."/>
            <person name="Place M."/>
            <person name="Herschleb J."/>
            <person name="Runnheim R."/>
            <person name="Forrest D."/>
            <person name="Amos-Landgraf J."/>
            <person name="Schwartz D.C."/>
            <person name="Cheng Z."/>
            <person name="Lindblad-Toh K."/>
            <person name="Eichler E.E."/>
            <person name="Ponting C.P."/>
        </authorList>
    </citation>
    <scope>NUCLEOTIDE SEQUENCE [LARGE SCALE GENOMIC DNA]</scope>
    <source>
        <strain>C57BL/6J</strain>
    </source>
</reference>
<reference key="3">
    <citation type="journal article" date="2004" name="Genome Res.">
        <title>The status, quality, and expansion of the NIH full-length cDNA project: the Mammalian Gene Collection (MGC).</title>
        <authorList>
            <consortium name="The MGC Project Team"/>
        </authorList>
    </citation>
    <scope>NUCLEOTIDE SEQUENCE [LARGE SCALE MRNA] (ISOFORM 1)</scope>
    <source>
        <tissue>Brain</tissue>
    </source>
</reference>
<reference key="4">
    <citation type="journal article" date="1997" name="Mol. Endocrinol.">
        <title>Cloning, chromosomal localization, and functional analysis of the murine estrogen receptor beta.</title>
        <authorList>
            <person name="Tremblay G.B."/>
            <person name="Tremblay A."/>
            <person name="Copeland N.G."/>
            <person name="Gilbert D.J."/>
            <person name="Jenkins N.A."/>
            <person name="Labrie F."/>
            <person name="Giguere V."/>
        </authorList>
    </citation>
    <scope>NUCLEOTIDE SEQUENCE [MRNA] OF 46-530</scope>
    <scope>MUTAGENESIS OF SER-105 AND SER-139</scope>
    <source>
        <strain>129/Sv</strain>
        <tissue>Ovary</tissue>
    </source>
</reference>
<reference key="5">
    <citation type="journal article" date="1997" name="Mol. Endocrinol.">
        <title>Mouse estrogen receptor beta forms estrogen response element-binding heterodimers with estrogen receptor alpha.</title>
        <authorList>
            <person name="Pettersson K."/>
            <person name="Grandien K."/>
            <person name="Kuiper G.G.J.M."/>
            <person name="Gustafsson J.-A."/>
        </authorList>
    </citation>
    <scope>NUCLEOTIDE SEQUENCE [GENOMIC DNA] OF 46-530</scope>
    <scope>CHARACTERIZATION</scope>
    <source>
        <tissue>Ovary</tissue>
    </source>
</reference>
<reference key="6">
    <citation type="journal article" date="2002" name="J. Bone Miner. Res.">
        <title>Exposure of KS483 cells to estrogen enhances osteogenesis and inhibits adipogenesis.</title>
        <authorList>
            <person name="Dang Z.C."/>
            <person name="van Bezooijen R.L."/>
            <person name="Karperien M."/>
            <person name="Papapoulos S.E."/>
            <person name="Lowik C.W."/>
        </authorList>
    </citation>
    <scope>NUCLEOTIDE SEQUENCE [MRNA] OF 46-530 (ISOFORM 2)</scope>
    <scope>INDUCTION</scope>
    <source>
        <strain>ddY</strain>
        <tissue>Calvaria</tissue>
    </source>
</reference>
<reference key="7">
    <citation type="submission" date="1998-05" db="EMBL/GenBank/DDBJ databases">
        <authorList>
            <person name="Leygue E."/>
            <person name="Lu B."/>
            <person name="Dotzlaw H."/>
            <person name="Glor C."/>
            <person name="Watson P.H."/>
            <person name="Murphy L.C."/>
        </authorList>
    </citation>
    <scope>NUCLEOTIDE SEQUENCE [MRNA] OF 1-60</scope>
    <source>
        <tissue>Ovary</tissue>
    </source>
</reference>
<reference key="8">
    <citation type="submission" date="1998-05" db="EMBL/GenBank/DDBJ databases">
        <authorList>
            <person name="Rosenfeld C.S."/>
            <person name="Lubahn D.B."/>
        </authorList>
    </citation>
    <scope>NUCLEOTIDE SEQUENCE [MRNA] OF 1-60</scope>
    <source>
        <tissue>Ovary</tissue>
    </source>
</reference>
<reference key="9">
    <citation type="journal article" date="1997" name="Nature">
        <title>The transcriptional co-activator p/CIP binds CBP and mediates nuclear-receptor function.</title>
        <authorList>
            <person name="Torchia J."/>
            <person name="Rose D.W."/>
            <person name="Inostroza J."/>
            <person name="Kamei Y."/>
            <person name="Westin S."/>
            <person name="Glass C.K."/>
            <person name="Rosenfeld M.G."/>
        </authorList>
    </citation>
    <scope>INTERACTION WITH NCOA3</scope>
</reference>
<reference key="10">
    <citation type="journal article" date="1998" name="Endocrinology">
        <title>Transcription and translation of estrogen receptor-beta in the male reproductive tract of estrogen receptor-alpha knock-out and wild-type mice.</title>
        <authorList>
            <person name="Rosenfeld C.S."/>
            <person name="Ganjam V.K."/>
            <person name="Taylor J.A."/>
            <person name="Yuan X."/>
            <person name="Stiehr J.R."/>
            <person name="Hardy M.P."/>
            <person name="Lubahn D.B."/>
        </authorList>
    </citation>
    <scope>TISSUE SPECIFICITY</scope>
</reference>
<reference key="11">
    <citation type="journal article" date="1998" name="Mol. Cell. Endocrinol.">
        <title>Estrogen receptor-beta mRNA variants in human and murine tissues.</title>
        <authorList>
            <person name="Lu B."/>
            <person name="Leygue E."/>
            <person name="Dotzlaw H."/>
            <person name="Murphy L.J."/>
            <person name="Murphy L.C."/>
            <person name="Watson P.H."/>
        </authorList>
    </citation>
    <scope>ALTERNATIVE SPLICING (ISOFORMS 1; 2; 3; 4 AND 5)</scope>
    <source>
        <tissue>Ovary</tissue>
    </source>
</reference>
<reference key="12">
    <citation type="journal article" date="1999" name="Mol. Cell">
        <title>Ligand-independent recruitment of SRC-1 to estrogen receptor beta through phosphorylation of activation function AF-1.</title>
        <authorList>
            <person name="Tremblay A."/>
            <person name="Tremblay G.B."/>
            <person name="Labrie F."/>
            <person name="Giguere V."/>
        </authorList>
    </citation>
    <scope>PHOSPHORYLATION AT SER-87 AND SER-105</scope>
</reference>
<reference key="13">
    <citation type="journal article" date="2000" name="Biochemistry">
        <title>Alternative O-glycosylation/O-phosphorylation of the murine estrogen receptor beta.</title>
        <authorList>
            <person name="Cheng X."/>
            <person name="Cole R.N."/>
            <person name="Zaia J."/>
            <person name="Hart G.W."/>
        </authorList>
    </citation>
    <scope>GLYCOSYLATION AT SER-61</scope>
    <scope>PHOSPHORYLATION AT SER-61</scope>
</reference>
<reference key="14">
    <citation type="journal article" date="2000" name="J. Biol. Chem.">
        <title>Isolation and characterization of peroxisome proliferator-activated receptor (PPAR) interacting protein (PRIP) as a coactivator for PPAR.</title>
        <authorList>
            <person name="Zhu Y.-J."/>
            <person name="Kan L."/>
            <person name="Qi C."/>
            <person name="Kanwar Y.S."/>
            <person name="Yeldandi A.V."/>
            <person name="Rao M.S."/>
            <person name="Reddy J.K."/>
        </authorList>
    </citation>
    <scope>INTERACTION WITH NCOA6</scope>
</reference>
<reference key="15">
    <citation type="journal article" date="2002" name="J. Biol. Chem.">
        <title>Molecular cloning and characterization of CAPER, a novel coactivator of activating protein-1 and estrogen receptors.</title>
        <authorList>
            <person name="Jung D.-J."/>
            <person name="Na S.-Y."/>
            <person name="Na D.S."/>
            <person name="Lee J.W."/>
        </authorList>
    </citation>
    <scope>INTERACTION WITH RBM39</scope>
</reference>
<proteinExistence type="evidence at protein level"/>
<gene>
    <name type="primary">Esr2</name>
    <name type="synonym">Estrb</name>
    <name type="synonym">Nr3a2</name>
</gene>
<comment type="function">
    <text evidence="2">Nuclear hormone receptor. Binds estrogens with an affinity similar to that of ESR1/ER-alpha, and activates expression of reporter genes containing estrogen response elements (ERE) in an estrogen-dependent manner.</text>
</comment>
<comment type="subunit">
    <text evidence="1 2 8">Binds DNA as a homodimer. Can form a heterodimer with ESR1. Interacts with NCOA1, NCOA3, NCOA5 and NCOA6 coactivators, leading to a strong increase of transcription of target genes. Interacts with UBE1C and AKAP13. Interacts with DNTTIP2 (By similarity). Interacts with CCDC62 in the presence of estradiol/E2; this interaction seems to enhance the transcription of target genes. Interacts with DNAAF4. Interacts with PRMT2. Interacts with CCAR2 (via N-terminus) in a ligand-independent manner (By similarity). Interacts with RBM39, in the presence of estradiol (E2) (PubMed:11704680). Interacts with STUB1/CHIP (By similarity).</text>
</comment>
<comment type="interaction">
    <interactant intactId="EBI-2526214">
        <id>O08537</id>
    </interactant>
    <interactant intactId="EBI-4288185">
        <id>P01101</id>
        <label>Fos</label>
    </interactant>
    <organismsDiffer>false</organismsDiffer>
    <experiments>2</experiments>
</comment>
<comment type="subcellular location">
    <subcellularLocation>
        <location evidence="2">Nucleus</location>
    </subcellularLocation>
</comment>
<comment type="alternative products">
    <event type="alternative splicing"/>
    <isoform>
        <id>O08537-1</id>
        <name>1</name>
        <name>Beta-1</name>
        <sequence type="displayed"/>
    </isoform>
    <isoform>
        <id>O08537-2</id>
        <name>2</name>
        <name>Beta-2</name>
        <sequence type="described" ref="VSP_003693"/>
    </isoform>
    <isoform>
        <id>O08537-4</id>
        <name>3</name>
        <name>Beta-5A</name>
        <sequence type="described" ref="VSP_003696"/>
    </isoform>
    <isoform>
        <id>O08537-6</id>
        <name>4</name>
        <sequence type="described" ref="VSP_042429 VSP_042430"/>
    </isoform>
    <isoform>
        <id>O08537-7</id>
        <name>5</name>
        <sequence type="described" ref="VSP_042431 VSP_042432"/>
    </isoform>
    <text>Additional isoforms seem to exist.</text>
</comment>
<comment type="tissue specificity">
    <text evidence="11">Expressed in prostate, ovary, Leydig cells and in epithelium of the efferent ductules and of the initial segment of the epididymis.</text>
</comment>
<comment type="induction">
    <text evidence="9">Isoforms 1 and 2 are down-regulated by 17-beta-estradiol.</text>
</comment>
<comment type="domain">
    <text>Composed of three domains: a modulating N-terminal domain, a DNA-binding domain and a C-terminal ligand-binding domain.</text>
</comment>
<comment type="PTM">
    <text evidence="6 7">Phosphorylation at Ser-87 and Ser-105 recruits NCOA1.</text>
</comment>
<comment type="miscellaneous">
    <molecule>Isoform 3</molecule>
    <text evidence="15">Corresponds to exons 5 and 6 deletion.</text>
</comment>
<comment type="miscellaneous">
    <molecule>Isoform 4</molecule>
    <text evidence="15">Corresponds to exon 5 deletion (PubMed:9685228). May be produced at very low levels due to a premature stop codon in the mRNA, leading to nonsense-mediated mRNA decay. No experimental confirmation available.</text>
</comment>
<comment type="miscellaneous">
    <molecule>Isoform 5</molecule>
    <text evidence="15">Corresponds to exon 6 deletion (PubMed:9685228). May be produced at very low levels due to a premature stop codon in the mRNA, leading to nonsense-mediated mRNA decay. No experimental confirmation available.</text>
</comment>
<comment type="similarity">
    <text evidence="14">Belongs to the nuclear hormone receptor family. NR3 subfamily.</text>
</comment>
<comment type="sequence caution" evidence="14">
    <conflict type="erroneous initiation">
        <sequence resource="EMBL-CDS" id="AAC17919"/>
    </conflict>
    <text>Extended N-terminus.</text>
</comment>
<comment type="sequence caution" evidence="14">
    <conflict type="erroneous initiation">
        <sequence resource="EMBL-CDS" id="AAI41076"/>
    </conflict>
    <text>Extended N-terminus.</text>
</comment>
<comment type="sequence caution" evidence="14">
    <conflict type="erroneous initiation">
        <sequence resource="EMBL-CDS" id="AAI45330"/>
    </conflict>
    <text>Extended N-terminus.</text>
</comment>
<comment type="sequence caution" evidence="14">
    <conflict type="erroneous initiation">
        <sequence resource="EMBL-CDS" id="AAL15175"/>
    </conflict>
    <text>Extended N-terminus.</text>
</comment>
<comment type="sequence caution" evidence="14">
    <conflict type="erroneous initiation">
        <sequence resource="EMBL-CDS" id="BAC35719"/>
    </conflict>
    <text>Extended N-terminus.</text>
</comment>
<comment type="sequence caution" evidence="14">
    <conflict type="erroneous initiation">
        <sequence resource="EMBL-CDS" id="BAC35770"/>
    </conflict>
    <text>Extended N-terminus.</text>
</comment>
<feature type="chain" id="PRO_0000053644" description="Estrogen receptor beta">
    <location>
        <begin position="1"/>
        <end position="530"/>
    </location>
</feature>
<feature type="domain" description="NR LBD" evidence="4">
    <location>
        <begin position="264"/>
        <end position="498"/>
    </location>
</feature>
<feature type="DNA-binding region" description="Nuclear receptor" evidence="3">
    <location>
        <begin position="149"/>
        <end position="214"/>
    </location>
</feature>
<feature type="zinc finger region" description="NR C4-type" evidence="3">
    <location>
        <begin position="149"/>
        <end position="169"/>
    </location>
</feature>
<feature type="zinc finger region" description="NR C4-type" evidence="3">
    <location>
        <begin position="185"/>
        <end position="209"/>
    </location>
</feature>
<feature type="region of interest" description="Modulating">
    <location>
        <begin position="1"/>
        <end position="148"/>
    </location>
</feature>
<feature type="region of interest" description="Disordered" evidence="5">
    <location>
        <begin position="506"/>
        <end position="530"/>
    </location>
</feature>
<feature type="compositionally biased region" description="Polar residues" evidence="5">
    <location>
        <begin position="506"/>
        <end position="515"/>
    </location>
</feature>
<feature type="modified residue" description="Phosphoserine; alternate" evidence="7">
    <location>
        <position position="61"/>
    </location>
</feature>
<feature type="modified residue" description="Phosphoserine; by MAPK" evidence="6">
    <location>
        <position position="87"/>
    </location>
</feature>
<feature type="modified residue" description="Phosphoserine; by MAPK" evidence="6">
    <location>
        <position position="105"/>
    </location>
</feature>
<feature type="glycosylation site" id="CAR_000201" description="O-linked (GlcNAc) serine; alternate" evidence="7">
    <location>
        <position position="61"/>
    </location>
</feature>
<feature type="splice variant" id="VSP_003696" description="In isoform 3." evidence="14">
    <location>
        <begin position="319"/>
        <end position="409"/>
    </location>
</feature>
<feature type="splice variant" id="VSP_042429" description="In isoform 4." evidence="14">
    <original>FVELSLLDQVRLLESCWMEVLMVGL</original>
    <variation>MRGSAWKGFWKSLTCSWRRRHGSVS</variation>
    <location>
        <begin position="319"/>
        <end position="343"/>
    </location>
</feature>
<feature type="splice variant" id="VSP_042430" description="In isoform 4." evidence="14">
    <location>
        <begin position="344"/>
        <end position="530"/>
    </location>
</feature>
<feature type="splice variant" id="VSP_003693" description="In isoform 2." evidence="12 13">
    <original>R</original>
    <variation>RSSEDPHWHVAQTKSAVPR</variation>
    <location>
        <position position="364"/>
    </location>
</feature>
<feature type="splice variant" id="VSP_042431" description="In isoform 5." evidence="14">
    <original>DEGKCVEGILEIF</original>
    <variation>YVPLGYRKPGSRE</variation>
    <location>
        <begin position="365"/>
        <end position="377"/>
    </location>
</feature>
<feature type="splice variant" id="VSP_042432" description="In isoform 5." evidence="14">
    <location>
        <begin position="378"/>
        <end position="530"/>
    </location>
</feature>
<feature type="mutagenesis site" description="Abolishes stimulatory effect of Ras." evidence="10">
    <original>S</original>
    <variation>A</variation>
    <location>
        <position position="105"/>
    </location>
</feature>
<feature type="mutagenesis site" description="No loss of the stimulatory effect of Ras." evidence="10">
    <original>S</original>
    <variation>A</variation>
    <location>
        <position position="139"/>
    </location>
</feature>
<feature type="sequence conflict" description="In Ref. 5; CAA03949." evidence="14" ref="5">
    <original>T</original>
    <variation>A</variation>
    <location>
        <position position="47"/>
    </location>
</feature>
<feature type="sequence conflict" description="In Ref. 5; CAA03949." evidence="14" ref="5">
    <original>A</original>
    <variation>T</variation>
    <location>
        <position position="142"/>
    </location>
</feature>
<feature type="sequence conflict" description="In Ref. 5; CAA03949." evidence="14" ref="5">
    <original>S</original>
    <variation>N</variation>
    <location>
        <position position="200"/>
    </location>
</feature>
<feature type="sequence conflict" description="In Ref. 1; AAB51132 and 6; AAL15175." evidence="14" ref="1 6">
    <original>D</original>
    <variation>G</variation>
    <location>
        <position position="378"/>
    </location>
</feature>
<feature type="sequence conflict" description="In Ref. 5; CAA03949." evidence="14" ref="5">
    <original>P</original>
    <variation>H</variation>
    <location>
        <position position="412"/>
    </location>
</feature>
<feature type="sequence conflict" description="In Ref. 5; CAA03949." evidence="14" ref="5">
    <original>G</original>
    <variation>R</variation>
    <location>
        <position position="445"/>
    </location>
</feature>
<feature type="sequence conflict" description="In Ref. 5; CAA03949." evidence="14" ref="5">
    <original>E</original>
    <variation>G</variation>
    <location>
        <position position="511"/>
    </location>
</feature>
<evidence type="ECO:0000250" key="1">
    <source>
        <dbReference type="UniProtKB" id="Q62986"/>
    </source>
</evidence>
<evidence type="ECO:0000250" key="2">
    <source>
        <dbReference type="UniProtKB" id="Q92731"/>
    </source>
</evidence>
<evidence type="ECO:0000255" key="3">
    <source>
        <dbReference type="PROSITE-ProRule" id="PRU00407"/>
    </source>
</evidence>
<evidence type="ECO:0000255" key="4">
    <source>
        <dbReference type="PROSITE-ProRule" id="PRU01189"/>
    </source>
</evidence>
<evidence type="ECO:0000256" key="5">
    <source>
        <dbReference type="SAM" id="MobiDB-lite"/>
    </source>
</evidence>
<evidence type="ECO:0000269" key="6">
    <source>
    </source>
</evidence>
<evidence type="ECO:0000269" key="7">
    <source>
    </source>
</evidence>
<evidence type="ECO:0000269" key="8">
    <source>
    </source>
</evidence>
<evidence type="ECO:0000269" key="9">
    <source>
    </source>
</evidence>
<evidence type="ECO:0000269" key="10">
    <source>
    </source>
</evidence>
<evidence type="ECO:0000269" key="11">
    <source>
    </source>
</evidence>
<evidence type="ECO:0000303" key="12">
    <source>
    </source>
</evidence>
<evidence type="ECO:0000303" key="13">
    <source>
    </source>
</evidence>
<evidence type="ECO:0000305" key="14"/>
<evidence type="ECO:0000305" key="15">
    <source>
    </source>
</evidence>
<name>ESR2_MOUSE</name>
<sequence>MEIKNSPSSLTSPASYNCSQSILPLEHGPIYIPSSYVESRHEYSAMTFYSPAVMNYSVPSSTGNLEGGPVRQTASPNVLWPTSGHLSPLATHCQSSLLYAEPQKSPWCEARSLEHTLPVNRETLKRKLGGSGCASPVTSPSAKRDAHFCAVCSDYASGYHYGVWSCEGCKAFFKRSIQGHNDYICPATNQCTIDKNRRKSCQACRLRKCYEVGMVKCGSRRERCGYRIVRRQRSASEQVHCLNKAKRTSGHTPRVKELLLNSLSPEQLVLTLLEAEPPNVLVSRPSMPFTEASMMMSLTKLADKELVHMIGWAKKIPGFVELSLLDQVRLLESCWMEVLMVGLMWRSIDHPGKLIFAPDLVLDRDEGKCVEGILEIFDMLLATTARFRELKLQHKEYLCVKAMILLNSSMYPLATASQEAESSRKLTHLLNAVTDALVWVISKSGISSQQQSVRLANLLMLLSHVRHISNKGMEHLLSMKCKNVVPVYDLLLEMLNAHTLRGYKSSISGSECCSTEDSKSKEGSQNLQSQ</sequence>